<sequence length="257" mass="28468">MKISDFMLEYEKFCPKELAVEGDPVGLQVGNPNDELTKVLVTLDIREQTVAEAKALGVNLIIAKHPLIFRPLSALTSMNDQEKLVLDLARAGIAVYTSHTNIDVVTGGLNDYFSQLLGMTDIEVLDDEEGLGRVGNIELTELSVLTEKVKASFGLDRLRLITYDHNLTQKIGRIAICGGSGGKLWPKALEKKADIYITGDIYYHVGHDMLSAGLLGIDPGHYIEHAFIRLVADKLRSFDMGVKIYESQEKTNPFYDI</sequence>
<proteinExistence type="inferred from homology"/>
<evidence type="ECO:0000250" key="1">
    <source>
        <dbReference type="UniProtKB" id="P0AFP6"/>
    </source>
</evidence>
<evidence type="ECO:0000305" key="2"/>
<accession>Q9CGM3</accession>
<feature type="chain" id="PRO_0000147313" description="GTP cyclohydrolase 1 type 2 homolog">
    <location>
        <begin position="1"/>
        <end position="257"/>
    </location>
</feature>
<feature type="binding site" evidence="1">
    <location>
        <position position="65"/>
    </location>
    <ligand>
        <name>a divalent metal cation</name>
        <dbReference type="ChEBI" id="CHEBI:60240"/>
        <label>2</label>
    </ligand>
</feature>
<feature type="binding site" evidence="1">
    <location>
        <position position="103"/>
    </location>
    <ligand>
        <name>a divalent metal cation</name>
        <dbReference type="ChEBI" id="CHEBI:60240"/>
        <label>1</label>
    </ligand>
</feature>
<feature type="binding site" evidence="1">
    <location>
        <position position="221"/>
    </location>
    <ligand>
        <name>a divalent metal cation</name>
        <dbReference type="ChEBI" id="CHEBI:60240"/>
        <label>2</label>
    </ligand>
</feature>
<feature type="binding site" evidence="1">
    <location>
        <position position="224"/>
    </location>
    <ligand>
        <name>a divalent metal cation</name>
        <dbReference type="ChEBI" id="CHEBI:60240"/>
        <label>1</label>
    </ligand>
</feature>
<feature type="binding site" evidence="1">
    <location>
        <position position="224"/>
    </location>
    <ligand>
        <name>a divalent metal cation</name>
        <dbReference type="ChEBI" id="CHEBI:60240"/>
        <label>2</label>
    </ligand>
</feature>
<comment type="subunit">
    <text evidence="1">Homohexamer.</text>
</comment>
<comment type="similarity">
    <text evidence="2">Belongs to the GTP cyclohydrolase I type 2/NIF3 family.</text>
</comment>
<name>GCH1L_LACLA</name>
<reference key="1">
    <citation type="journal article" date="2001" name="Genome Res.">
        <title>The complete genome sequence of the lactic acid bacterium Lactococcus lactis ssp. lactis IL1403.</title>
        <authorList>
            <person name="Bolotin A."/>
            <person name="Wincker P."/>
            <person name="Mauger S."/>
            <person name="Jaillon O."/>
            <person name="Malarme K."/>
            <person name="Weissenbach J."/>
            <person name="Ehrlich S.D."/>
            <person name="Sorokin A."/>
        </authorList>
    </citation>
    <scope>NUCLEOTIDE SEQUENCE [LARGE SCALE GENOMIC DNA]</scope>
    <source>
        <strain>IL1403</strain>
    </source>
</reference>
<dbReference type="EMBL" id="AE005176">
    <property type="protein sequence ID" value="AAK05171.1"/>
    <property type="molecule type" value="Genomic_DNA"/>
</dbReference>
<dbReference type="PIR" id="A86759">
    <property type="entry name" value="A86759"/>
</dbReference>
<dbReference type="RefSeq" id="NP_267229.1">
    <property type="nucleotide sequence ID" value="NC_002662.1"/>
</dbReference>
<dbReference type="RefSeq" id="WP_010905742.1">
    <property type="nucleotide sequence ID" value="NC_002662.1"/>
</dbReference>
<dbReference type="SMR" id="Q9CGM3"/>
<dbReference type="PaxDb" id="272623-L84937"/>
<dbReference type="EnsemblBacteria" id="AAK05171">
    <property type="protein sequence ID" value="AAK05171"/>
    <property type="gene ID" value="L84937"/>
</dbReference>
<dbReference type="KEGG" id="lla:L84937"/>
<dbReference type="PATRIC" id="fig|272623.7.peg.1151"/>
<dbReference type="eggNOG" id="COG0327">
    <property type="taxonomic scope" value="Bacteria"/>
</dbReference>
<dbReference type="HOGENOM" id="CLU_037423_2_0_9"/>
<dbReference type="OrthoDB" id="9792792at2"/>
<dbReference type="Proteomes" id="UP000002196">
    <property type="component" value="Chromosome"/>
</dbReference>
<dbReference type="GO" id="GO:0005737">
    <property type="term" value="C:cytoplasm"/>
    <property type="evidence" value="ECO:0007669"/>
    <property type="project" value="TreeGrafter"/>
</dbReference>
<dbReference type="GO" id="GO:0046872">
    <property type="term" value="F:metal ion binding"/>
    <property type="evidence" value="ECO:0007669"/>
    <property type="project" value="UniProtKB-KW"/>
</dbReference>
<dbReference type="FunFam" id="3.40.1390.30:FF:000001">
    <property type="entry name" value="GTP cyclohydrolase 1 type 2"/>
    <property type="match status" value="1"/>
</dbReference>
<dbReference type="Gene3D" id="3.40.1390.30">
    <property type="entry name" value="NIF3 (NGG1p interacting factor 3)-like"/>
    <property type="match status" value="2"/>
</dbReference>
<dbReference type="InterPro" id="IPR002678">
    <property type="entry name" value="DUF34/NIF3"/>
</dbReference>
<dbReference type="InterPro" id="IPR036069">
    <property type="entry name" value="DUF34/NIF3_sf"/>
</dbReference>
<dbReference type="NCBIfam" id="TIGR00486">
    <property type="entry name" value="YbgI_SA1388"/>
    <property type="match status" value="1"/>
</dbReference>
<dbReference type="PANTHER" id="PTHR13799:SF14">
    <property type="entry name" value="GTP CYCLOHYDROLASE 1 TYPE 2 HOMOLOG"/>
    <property type="match status" value="1"/>
</dbReference>
<dbReference type="PANTHER" id="PTHR13799">
    <property type="entry name" value="NGG1 INTERACTING FACTOR 3"/>
    <property type="match status" value="1"/>
</dbReference>
<dbReference type="Pfam" id="PF01784">
    <property type="entry name" value="DUF34_NIF3"/>
    <property type="match status" value="1"/>
</dbReference>
<dbReference type="SUPFAM" id="SSF102705">
    <property type="entry name" value="NIF3 (NGG1p interacting factor 3)-like"/>
    <property type="match status" value="1"/>
</dbReference>
<keyword id="KW-0479">Metal-binding</keyword>
<keyword id="KW-1185">Reference proteome</keyword>
<protein>
    <recommendedName>
        <fullName>GTP cyclohydrolase 1 type 2 homolog</fullName>
    </recommendedName>
</protein>
<gene>
    <name type="primary">ykiD</name>
    <name type="ordered locus">LL1073</name>
    <name type="ORF">L84937</name>
</gene>
<organism>
    <name type="scientific">Lactococcus lactis subsp. lactis (strain IL1403)</name>
    <name type="common">Streptococcus lactis</name>
    <dbReference type="NCBI Taxonomy" id="272623"/>
    <lineage>
        <taxon>Bacteria</taxon>
        <taxon>Bacillati</taxon>
        <taxon>Bacillota</taxon>
        <taxon>Bacilli</taxon>
        <taxon>Lactobacillales</taxon>
        <taxon>Streptococcaceae</taxon>
        <taxon>Lactococcus</taxon>
    </lineage>
</organism>